<evidence type="ECO:0000255" key="1">
    <source>
        <dbReference type="HAMAP-Rule" id="MF_00456"/>
    </source>
</evidence>
<organism>
    <name type="scientific">Polaromonas naphthalenivorans (strain CJ2)</name>
    <dbReference type="NCBI Taxonomy" id="365044"/>
    <lineage>
        <taxon>Bacteria</taxon>
        <taxon>Pseudomonadati</taxon>
        <taxon>Pseudomonadota</taxon>
        <taxon>Betaproteobacteria</taxon>
        <taxon>Burkholderiales</taxon>
        <taxon>Comamonadaceae</taxon>
        <taxon>Polaromonas</taxon>
    </lineage>
</organism>
<sequence>MHDPLGNPVLRNARRIVVKVGSSLVTNEGRGLDAIAIGQWCEQLAALIKDGREVIMVSSGAIAEGMKRLGWSLRPKAIHELQAAAAVGQMGLVQMYETKLRENGIGSAQVLLTHADLADRERYLNARSTLLTLLQLGVVPVINENDTVVNDEIKFGDNDTLGALVANLVEADALIILTDQKGLYTADPRKDPAAQFVHEAKAGDAALEAMAGGAGSSIGRGGMITKILAAKRAAGSGASTVIAWGREPEALIRLTQGEAIGTLLVAQTQKTQARKQWMADHLQLRGSVTVDPGAASMVQVGGKSLLPIGMTGVQGDFSRGDVIAVKDADGVEIARGLANYSSAEARLICRKVSSEFEKLLGYTGESEMVHRTNLILSR</sequence>
<gene>
    <name evidence="1" type="primary">proB</name>
    <name type="ordered locus">Pnap_0748</name>
</gene>
<name>PROB_POLNA</name>
<comment type="function">
    <text evidence="1">Catalyzes the transfer of a phosphate group to glutamate to form L-glutamate 5-phosphate.</text>
</comment>
<comment type="catalytic activity">
    <reaction evidence="1">
        <text>L-glutamate + ATP = L-glutamyl 5-phosphate + ADP</text>
        <dbReference type="Rhea" id="RHEA:14877"/>
        <dbReference type="ChEBI" id="CHEBI:29985"/>
        <dbReference type="ChEBI" id="CHEBI:30616"/>
        <dbReference type="ChEBI" id="CHEBI:58274"/>
        <dbReference type="ChEBI" id="CHEBI:456216"/>
        <dbReference type="EC" id="2.7.2.11"/>
    </reaction>
</comment>
<comment type="pathway">
    <text evidence="1">Amino-acid biosynthesis; L-proline biosynthesis; L-glutamate 5-semialdehyde from L-glutamate: step 1/2.</text>
</comment>
<comment type="subcellular location">
    <subcellularLocation>
        <location evidence="1">Cytoplasm</location>
    </subcellularLocation>
</comment>
<comment type="similarity">
    <text evidence="1">Belongs to the glutamate 5-kinase family.</text>
</comment>
<reference key="1">
    <citation type="journal article" date="2009" name="Environ. Microbiol.">
        <title>The genome of Polaromonas naphthalenivorans strain CJ2, isolated from coal tar-contaminated sediment, reveals physiological and metabolic versatility and evolution through extensive horizontal gene transfer.</title>
        <authorList>
            <person name="Yagi J.M."/>
            <person name="Sims D."/>
            <person name="Brettin T."/>
            <person name="Bruce D."/>
            <person name="Madsen E.L."/>
        </authorList>
    </citation>
    <scope>NUCLEOTIDE SEQUENCE [LARGE SCALE GENOMIC DNA]</scope>
    <source>
        <strain>CJ2</strain>
    </source>
</reference>
<feature type="chain" id="PRO_1000081086" description="Glutamate 5-kinase">
    <location>
        <begin position="1"/>
        <end position="378"/>
    </location>
</feature>
<feature type="domain" description="PUA" evidence="1">
    <location>
        <begin position="285"/>
        <end position="363"/>
    </location>
</feature>
<feature type="binding site" evidence="1">
    <location>
        <position position="19"/>
    </location>
    <ligand>
        <name>ATP</name>
        <dbReference type="ChEBI" id="CHEBI:30616"/>
    </ligand>
</feature>
<feature type="binding site" evidence="1">
    <location>
        <position position="59"/>
    </location>
    <ligand>
        <name>substrate</name>
    </ligand>
</feature>
<feature type="binding site" evidence="1">
    <location>
        <position position="146"/>
    </location>
    <ligand>
        <name>substrate</name>
    </ligand>
</feature>
<feature type="binding site" evidence="1">
    <location>
        <position position="158"/>
    </location>
    <ligand>
        <name>substrate</name>
    </ligand>
</feature>
<feature type="binding site" evidence="1">
    <location>
        <begin position="178"/>
        <end position="179"/>
    </location>
    <ligand>
        <name>ATP</name>
        <dbReference type="ChEBI" id="CHEBI:30616"/>
    </ligand>
</feature>
<keyword id="KW-0028">Amino-acid biosynthesis</keyword>
<keyword id="KW-0067">ATP-binding</keyword>
<keyword id="KW-0963">Cytoplasm</keyword>
<keyword id="KW-0418">Kinase</keyword>
<keyword id="KW-0547">Nucleotide-binding</keyword>
<keyword id="KW-0641">Proline biosynthesis</keyword>
<keyword id="KW-1185">Reference proteome</keyword>
<keyword id="KW-0808">Transferase</keyword>
<protein>
    <recommendedName>
        <fullName evidence="1">Glutamate 5-kinase</fullName>
        <ecNumber evidence="1">2.7.2.11</ecNumber>
    </recommendedName>
    <alternativeName>
        <fullName evidence="1">Gamma-glutamyl kinase</fullName>
        <shortName evidence="1">GK</shortName>
    </alternativeName>
</protein>
<dbReference type="EC" id="2.7.2.11" evidence="1"/>
<dbReference type="EMBL" id="CP000529">
    <property type="protein sequence ID" value="ABM36067.1"/>
    <property type="molecule type" value="Genomic_DNA"/>
</dbReference>
<dbReference type="RefSeq" id="WP_011800162.1">
    <property type="nucleotide sequence ID" value="NC_008781.1"/>
</dbReference>
<dbReference type="SMR" id="A1VK89"/>
<dbReference type="STRING" id="365044.Pnap_0748"/>
<dbReference type="KEGG" id="pna:Pnap_0748"/>
<dbReference type="eggNOG" id="COG0263">
    <property type="taxonomic scope" value="Bacteria"/>
</dbReference>
<dbReference type="HOGENOM" id="CLU_025400_2_0_4"/>
<dbReference type="OrthoDB" id="9804434at2"/>
<dbReference type="UniPathway" id="UPA00098">
    <property type="reaction ID" value="UER00359"/>
</dbReference>
<dbReference type="Proteomes" id="UP000000644">
    <property type="component" value="Chromosome"/>
</dbReference>
<dbReference type="GO" id="GO:0005829">
    <property type="term" value="C:cytosol"/>
    <property type="evidence" value="ECO:0007669"/>
    <property type="project" value="TreeGrafter"/>
</dbReference>
<dbReference type="GO" id="GO:0005524">
    <property type="term" value="F:ATP binding"/>
    <property type="evidence" value="ECO:0007669"/>
    <property type="project" value="UniProtKB-KW"/>
</dbReference>
<dbReference type="GO" id="GO:0004349">
    <property type="term" value="F:glutamate 5-kinase activity"/>
    <property type="evidence" value="ECO:0007669"/>
    <property type="project" value="UniProtKB-UniRule"/>
</dbReference>
<dbReference type="GO" id="GO:0003723">
    <property type="term" value="F:RNA binding"/>
    <property type="evidence" value="ECO:0007669"/>
    <property type="project" value="InterPro"/>
</dbReference>
<dbReference type="GO" id="GO:0055129">
    <property type="term" value="P:L-proline biosynthetic process"/>
    <property type="evidence" value="ECO:0007669"/>
    <property type="project" value="UniProtKB-UniRule"/>
</dbReference>
<dbReference type="CDD" id="cd04242">
    <property type="entry name" value="AAK_G5K_ProB"/>
    <property type="match status" value="1"/>
</dbReference>
<dbReference type="CDD" id="cd21157">
    <property type="entry name" value="PUA_G5K"/>
    <property type="match status" value="1"/>
</dbReference>
<dbReference type="FunFam" id="3.40.1160.10:FF:000018">
    <property type="entry name" value="Glutamate 5-kinase"/>
    <property type="match status" value="1"/>
</dbReference>
<dbReference type="Gene3D" id="3.40.1160.10">
    <property type="entry name" value="Acetylglutamate kinase-like"/>
    <property type="match status" value="1"/>
</dbReference>
<dbReference type="Gene3D" id="2.30.130.10">
    <property type="entry name" value="PUA domain"/>
    <property type="match status" value="1"/>
</dbReference>
<dbReference type="HAMAP" id="MF_00456">
    <property type="entry name" value="ProB"/>
    <property type="match status" value="1"/>
</dbReference>
<dbReference type="InterPro" id="IPR036393">
    <property type="entry name" value="AceGlu_kinase-like_sf"/>
</dbReference>
<dbReference type="InterPro" id="IPR001048">
    <property type="entry name" value="Asp/Glu/Uridylate_kinase"/>
</dbReference>
<dbReference type="InterPro" id="IPR041739">
    <property type="entry name" value="G5K_ProB"/>
</dbReference>
<dbReference type="InterPro" id="IPR001057">
    <property type="entry name" value="Glu/AcGlu_kinase"/>
</dbReference>
<dbReference type="InterPro" id="IPR011529">
    <property type="entry name" value="Glu_5kinase"/>
</dbReference>
<dbReference type="InterPro" id="IPR005715">
    <property type="entry name" value="Glu_5kinase/COase_Synthase"/>
</dbReference>
<dbReference type="InterPro" id="IPR019797">
    <property type="entry name" value="Glutamate_5-kinase_CS"/>
</dbReference>
<dbReference type="InterPro" id="IPR002478">
    <property type="entry name" value="PUA"/>
</dbReference>
<dbReference type="InterPro" id="IPR015947">
    <property type="entry name" value="PUA-like_sf"/>
</dbReference>
<dbReference type="InterPro" id="IPR036974">
    <property type="entry name" value="PUA_sf"/>
</dbReference>
<dbReference type="NCBIfam" id="TIGR01027">
    <property type="entry name" value="proB"/>
    <property type="match status" value="1"/>
</dbReference>
<dbReference type="PANTHER" id="PTHR43654">
    <property type="entry name" value="GLUTAMATE 5-KINASE"/>
    <property type="match status" value="1"/>
</dbReference>
<dbReference type="PANTHER" id="PTHR43654:SF1">
    <property type="entry name" value="ISOPENTENYL PHOSPHATE KINASE"/>
    <property type="match status" value="1"/>
</dbReference>
<dbReference type="Pfam" id="PF00696">
    <property type="entry name" value="AA_kinase"/>
    <property type="match status" value="1"/>
</dbReference>
<dbReference type="Pfam" id="PF01472">
    <property type="entry name" value="PUA"/>
    <property type="match status" value="1"/>
</dbReference>
<dbReference type="PIRSF" id="PIRSF000729">
    <property type="entry name" value="GK"/>
    <property type="match status" value="1"/>
</dbReference>
<dbReference type="PRINTS" id="PR00474">
    <property type="entry name" value="GLU5KINASE"/>
</dbReference>
<dbReference type="SMART" id="SM00359">
    <property type="entry name" value="PUA"/>
    <property type="match status" value="1"/>
</dbReference>
<dbReference type="SUPFAM" id="SSF53633">
    <property type="entry name" value="Carbamate kinase-like"/>
    <property type="match status" value="1"/>
</dbReference>
<dbReference type="SUPFAM" id="SSF88697">
    <property type="entry name" value="PUA domain-like"/>
    <property type="match status" value="1"/>
</dbReference>
<dbReference type="PROSITE" id="PS00902">
    <property type="entry name" value="GLUTAMATE_5_KINASE"/>
    <property type="match status" value="1"/>
</dbReference>
<dbReference type="PROSITE" id="PS50890">
    <property type="entry name" value="PUA"/>
    <property type="match status" value="1"/>
</dbReference>
<proteinExistence type="inferred from homology"/>
<accession>A1VK89</accession>